<dbReference type="EC" id="6.3.1.5" evidence="1"/>
<dbReference type="EMBL" id="CP000919">
    <property type="protein sequence ID" value="ACO19108.1"/>
    <property type="molecule type" value="Genomic_DNA"/>
</dbReference>
<dbReference type="RefSeq" id="WP_000058033.1">
    <property type="nucleotide sequence ID" value="NC_012466.1"/>
</dbReference>
<dbReference type="SMR" id="C1CF07"/>
<dbReference type="GeneID" id="45653323"/>
<dbReference type="KEGG" id="sjj:SPJ_1318"/>
<dbReference type="HOGENOM" id="CLU_059327_3_0_9"/>
<dbReference type="UniPathway" id="UPA00253">
    <property type="reaction ID" value="UER00333"/>
</dbReference>
<dbReference type="Proteomes" id="UP000002206">
    <property type="component" value="Chromosome"/>
</dbReference>
<dbReference type="GO" id="GO:0005737">
    <property type="term" value="C:cytoplasm"/>
    <property type="evidence" value="ECO:0007669"/>
    <property type="project" value="InterPro"/>
</dbReference>
<dbReference type="GO" id="GO:0005524">
    <property type="term" value="F:ATP binding"/>
    <property type="evidence" value="ECO:0007669"/>
    <property type="project" value="UniProtKB-UniRule"/>
</dbReference>
<dbReference type="GO" id="GO:0004359">
    <property type="term" value="F:glutaminase activity"/>
    <property type="evidence" value="ECO:0007669"/>
    <property type="project" value="InterPro"/>
</dbReference>
<dbReference type="GO" id="GO:0046872">
    <property type="term" value="F:metal ion binding"/>
    <property type="evidence" value="ECO:0007669"/>
    <property type="project" value="UniProtKB-KW"/>
</dbReference>
<dbReference type="GO" id="GO:0003952">
    <property type="term" value="F:NAD+ synthase (glutamine-hydrolyzing) activity"/>
    <property type="evidence" value="ECO:0007669"/>
    <property type="project" value="InterPro"/>
</dbReference>
<dbReference type="GO" id="GO:0008795">
    <property type="term" value="F:NAD+ synthase activity"/>
    <property type="evidence" value="ECO:0007669"/>
    <property type="project" value="UniProtKB-UniRule"/>
</dbReference>
<dbReference type="GO" id="GO:0009435">
    <property type="term" value="P:NAD biosynthetic process"/>
    <property type="evidence" value="ECO:0007669"/>
    <property type="project" value="UniProtKB-UniRule"/>
</dbReference>
<dbReference type="CDD" id="cd00553">
    <property type="entry name" value="NAD_synthase"/>
    <property type="match status" value="1"/>
</dbReference>
<dbReference type="FunFam" id="3.40.50.620:FF:000015">
    <property type="entry name" value="NH(3)-dependent NAD(+) synthetase"/>
    <property type="match status" value="1"/>
</dbReference>
<dbReference type="Gene3D" id="3.40.50.620">
    <property type="entry name" value="HUPs"/>
    <property type="match status" value="1"/>
</dbReference>
<dbReference type="HAMAP" id="MF_00193">
    <property type="entry name" value="NadE_ammonia_dep"/>
    <property type="match status" value="1"/>
</dbReference>
<dbReference type="InterPro" id="IPR022310">
    <property type="entry name" value="NAD/GMP_synthase"/>
</dbReference>
<dbReference type="InterPro" id="IPR003694">
    <property type="entry name" value="NAD_synthase"/>
</dbReference>
<dbReference type="InterPro" id="IPR022926">
    <property type="entry name" value="NH(3)-dep_NAD(+)_synth"/>
</dbReference>
<dbReference type="InterPro" id="IPR014729">
    <property type="entry name" value="Rossmann-like_a/b/a_fold"/>
</dbReference>
<dbReference type="NCBIfam" id="TIGR00552">
    <property type="entry name" value="nadE"/>
    <property type="match status" value="1"/>
</dbReference>
<dbReference type="NCBIfam" id="NF001979">
    <property type="entry name" value="PRK00768.1"/>
    <property type="match status" value="1"/>
</dbReference>
<dbReference type="PANTHER" id="PTHR23090">
    <property type="entry name" value="NH 3 /GLUTAMINE-DEPENDENT NAD + SYNTHETASE"/>
    <property type="match status" value="1"/>
</dbReference>
<dbReference type="PANTHER" id="PTHR23090:SF7">
    <property type="entry name" value="NH(3)-DEPENDENT NAD(+) SYNTHETASE"/>
    <property type="match status" value="1"/>
</dbReference>
<dbReference type="Pfam" id="PF02540">
    <property type="entry name" value="NAD_synthase"/>
    <property type="match status" value="1"/>
</dbReference>
<dbReference type="SUPFAM" id="SSF52402">
    <property type="entry name" value="Adenine nucleotide alpha hydrolases-like"/>
    <property type="match status" value="1"/>
</dbReference>
<protein>
    <recommendedName>
        <fullName evidence="1">NH(3)-dependent NAD(+) synthetase</fullName>
        <ecNumber evidence="1">6.3.1.5</ecNumber>
    </recommendedName>
</protein>
<keyword id="KW-0067">ATP-binding</keyword>
<keyword id="KW-0436">Ligase</keyword>
<keyword id="KW-0460">Magnesium</keyword>
<keyword id="KW-0479">Metal-binding</keyword>
<keyword id="KW-0520">NAD</keyword>
<keyword id="KW-0547">Nucleotide-binding</keyword>
<name>NADE_STRZJ</name>
<sequence>MSLQETIIQELGVKPVIDAQEEIRRSIDFLKRYLKKHPFLKTFVLGISGGQDSTLAGRLAQLAMEELRAETGDDSYKFIAVRLPYGVQADEADAQKALAFIQPDVSLVVNIKESADAMTAAVEATGSPVSDFNKGNIKARCRMIAQYALAGSHSGAVIGTDHAAENITGFFTKFGDGGADILPLYRLNKRQGKQLLQKLGAEPALYEKIPTADLEEDKPGLADEVALGVTYAEIDDYLEGKTISPEAQATIENWWHKGQHKRHLPITVFDDFWE</sequence>
<feature type="chain" id="PRO_1000191510" description="NH(3)-dependent NAD(+) synthetase">
    <location>
        <begin position="1"/>
        <end position="274"/>
    </location>
</feature>
<feature type="binding site" evidence="1">
    <location>
        <begin position="46"/>
        <end position="53"/>
    </location>
    <ligand>
        <name>ATP</name>
        <dbReference type="ChEBI" id="CHEBI:30616"/>
    </ligand>
</feature>
<feature type="binding site" evidence="1">
    <location>
        <position position="52"/>
    </location>
    <ligand>
        <name>Mg(2+)</name>
        <dbReference type="ChEBI" id="CHEBI:18420"/>
    </ligand>
</feature>
<feature type="binding site" evidence="1">
    <location>
        <position position="140"/>
    </location>
    <ligand>
        <name>deamido-NAD(+)</name>
        <dbReference type="ChEBI" id="CHEBI:58437"/>
    </ligand>
</feature>
<feature type="binding site" evidence="1">
    <location>
        <position position="160"/>
    </location>
    <ligand>
        <name>ATP</name>
        <dbReference type="ChEBI" id="CHEBI:30616"/>
    </ligand>
</feature>
<feature type="binding site" evidence="1">
    <location>
        <position position="165"/>
    </location>
    <ligand>
        <name>Mg(2+)</name>
        <dbReference type="ChEBI" id="CHEBI:18420"/>
    </ligand>
</feature>
<feature type="binding site" evidence="1">
    <location>
        <position position="173"/>
    </location>
    <ligand>
        <name>deamido-NAD(+)</name>
        <dbReference type="ChEBI" id="CHEBI:58437"/>
    </ligand>
</feature>
<feature type="binding site" evidence="1">
    <location>
        <position position="180"/>
    </location>
    <ligand>
        <name>deamido-NAD(+)</name>
        <dbReference type="ChEBI" id="CHEBI:58437"/>
    </ligand>
</feature>
<feature type="binding site" evidence="1">
    <location>
        <position position="189"/>
    </location>
    <ligand>
        <name>ATP</name>
        <dbReference type="ChEBI" id="CHEBI:30616"/>
    </ligand>
</feature>
<feature type="binding site" evidence="1">
    <location>
        <position position="211"/>
    </location>
    <ligand>
        <name>ATP</name>
        <dbReference type="ChEBI" id="CHEBI:30616"/>
    </ligand>
</feature>
<feature type="binding site" evidence="1">
    <location>
        <begin position="260"/>
        <end position="261"/>
    </location>
    <ligand>
        <name>deamido-NAD(+)</name>
        <dbReference type="ChEBI" id="CHEBI:58437"/>
    </ligand>
</feature>
<reference key="1">
    <citation type="journal article" date="2010" name="Genome Biol.">
        <title>Structure and dynamics of the pan-genome of Streptococcus pneumoniae and closely related species.</title>
        <authorList>
            <person name="Donati C."/>
            <person name="Hiller N.L."/>
            <person name="Tettelin H."/>
            <person name="Muzzi A."/>
            <person name="Croucher N.J."/>
            <person name="Angiuoli S.V."/>
            <person name="Oggioni M."/>
            <person name="Dunning Hotopp J.C."/>
            <person name="Hu F.Z."/>
            <person name="Riley D.R."/>
            <person name="Covacci A."/>
            <person name="Mitchell T.J."/>
            <person name="Bentley S.D."/>
            <person name="Kilian M."/>
            <person name="Ehrlich G.D."/>
            <person name="Rappuoli R."/>
            <person name="Moxon E.R."/>
            <person name="Masignani V."/>
        </authorList>
    </citation>
    <scope>NUCLEOTIDE SEQUENCE [LARGE SCALE GENOMIC DNA]</scope>
    <source>
        <strain>JJA</strain>
    </source>
</reference>
<comment type="function">
    <text evidence="1">Catalyzes the ATP-dependent amidation of deamido-NAD to form NAD. Uses ammonia as a nitrogen source.</text>
</comment>
<comment type="catalytic activity">
    <reaction evidence="1">
        <text>deamido-NAD(+) + NH4(+) + ATP = AMP + diphosphate + NAD(+) + H(+)</text>
        <dbReference type="Rhea" id="RHEA:21188"/>
        <dbReference type="ChEBI" id="CHEBI:15378"/>
        <dbReference type="ChEBI" id="CHEBI:28938"/>
        <dbReference type="ChEBI" id="CHEBI:30616"/>
        <dbReference type="ChEBI" id="CHEBI:33019"/>
        <dbReference type="ChEBI" id="CHEBI:57540"/>
        <dbReference type="ChEBI" id="CHEBI:58437"/>
        <dbReference type="ChEBI" id="CHEBI:456215"/>
        <dbReference type="EC" id="6.3.1.5"/>
    </reaction>
</comment>
<comment type="pathway">
    <text evidence="1">Cofactor biosynthesis; NAD(+) biosynthesis; NAD(+) from deamido-NAD(+) (ammonia route): step 1/1.</text>
</comment>
<comment type="subunit">
    <text evidence="1">Homodimer.</text>
</comment>
<comment type="similarity">
    <text evidence="1">Belongs to the NAD synthetase family.</text>
</comment>
<proteinExistence type="inferred from homology"/>
<accession>C1CF07</accession>
<evidence type="ECO:0000255" key="1">
    <source>
        <dbReference type="HAMAP-Rule" id="MF_00193"/>
    </source>
</evidence>
<organism>
    <name type="scientific">Streptococcus pneumoniae (strain JJA)</name>
    <dbReference type="NCBI Taxonomy" id="488222"/>
    <lineage>
        <taxon>Bacteria</taxon>
        <taxon>Bacillati</taxon>
        <taxon>Bacillota</taxon>
        <taxon>Bacilli</taxon>
        <taxon>Lactobacillales</taxon>
        <taxon>Streptococcaceae</taxon>
        <taxon>Streptococcus</taxon>
    </lineage>
</organism>
<gene>
    <name evidence="1" type="primary">nadE</name>
    <name type="ordered locus">SPJ_1318</name>
</gene>